<gene>
    <name evidence="1" type="primary">coaD</name>
    <name type="ordered locus">SAV_2669</name>
</gene>
<proteinExistence type="inferred from homology"/>
<dbReference type="EC" id="2.7.7.3" evidence="1"/>
<dbReference type="EMBL" id="BA000030">
    <property type="protein sequence ID" value="BAC70380.1"/>
    <property type="molecule type" value="Genomic_DNA"/>
</dbReference>
<dbReference type="RefSeq" id="WP_010984102.1">
    <property type="nucleotide sequence ID" value="NZ_JZJK01000071.1"/>
</dbReference>
<dbReference type="SMR" id="Q82JT5"/>
<dbReference type="GeneID" id="41539752"/>
<dbReference type="KEGG" id="sma:SAVERM_2669"/>
<dbReference type="eggNOG" id="COG0669">
    <property type="taxonomic scope" value="Bacteria"/>
</dbReference>
<dbReference type="HOGENOM" id="CLU_100149_0_1_11"/>
<dbReference type="UniPathway" id="UPA00241">
    <property type="reaction ID" value="UER00355"/>
</dbReference>
<dbReference type="Proteomes" id="UP000000428">
    <property type="component" value="Chromosome"/>
</dbReference>
<dbReference type="GO" id="GO:0005737">
    <property type="term" value="C:cytoplasm"/>
    <property type="evidence" value="ECO:0007669"/>
    <property type="project" value="UniProtKB-SubCell"/>
</dbReference>
<dbReference type="GO" id="GO:0005524">
    <property type="term" value="F:ATP binding"/>
    <property type="evidence" value="ECO:0007669"/>
    <property type="project" value="UniProtKB-KW"/>
</dbReference>
<dbReference type="GO" id="GO:0004595">
    <property type="term" value="F:pantetheine-phosphate adenylyltransferase activity"/>
    <property type="evidence" value="ECO:0007669"/>
    <property type="project" value="UniProtKB-UniRule"/>
</dbReference>
<dbReference type="GO" id="GO:0015937">
    <property type="term" value="P:coenzyme A biosynthetic process"/>
    <property type="evidence" value="ECO:0007669"/>
    <property type="project" value="UniProtKB-UniRule"/>
</dbReference>
<dbReference type="CDD" id="cd02163">
    <property type="entry name" value="PPAT"/>
    <property type="match status" value="1"/>
</dbReference>
<dbReference type="Gene3D" id="3.40.50.620">
    <property type="entry name" value="HUPs"/>
    <property type="match status" value="1"/>
</dbReference>
<dbReference type="HAMAP" id="MF_00151">
    <property type="entry name" value="PPAT_bact"/>
    <property type="match status" value="1"/>
</dbReference>
<dbReference type="InterPro" id="IPR004821">
    <property type="entry name" value="Cyt_trans-like"/>
</dbReference>
<dbReference type="InterPro" id="IPR001980">
    <property type="entry name" value="PPAT"/>
</dbReference>
<dbReference type="InterPro" id="IPR014729">
    <property type="entry name" value="Rossmann-like_a/b/a_fold"/>
</dbReference>
<dbReference type="NCBIfam" id="TIGR01510">
    <property type="entry name" value="coaD_prev_kdtB"/>
    <property type="match status" value="1"/>
</dbReference>
<dbReference type="NCBIfam" id="TIGR00125">
    <property type="entry name" value="cyt_tran_rel"/>
    <property type="match status" value="1"/>
</dbReference>
<dbReference type="PANTHER" id="PTHR21342">
    <property type="entry name" value="PHOSPHOPANTETHEINE ADENYLYLTRANSFERASE"/>
    <property type="match status" value="1"/>
</dbReference>
<dbReference type="PANTHER" id="PTHR21342:SF1">
    <property type="entry name" value="PHOSPHOPANTETHEINE ADENYLYLTRANSFERASE"/>
    <property type="match status" value="1"/>
</dbReference>
<dbReference type="Pfam" id="PF01467">
    <property type="entry name" value="CTP_transf_like"/>
    <property type="match status" value="1"/>
</dbReference>
<dbReference type="PRINTS" id="PR01020">
    <property type="entry name" value="LPSBIOSNTHSS"/>
</dbReference>
<dbReference type="SUPFAM" id="SSF52374">
    <property type="entry name" value="Nucleotidylyl transferase"/>
    <property type="match status" value="1"/>
</dbReference>
<protein>
    <recommendedName>
        <fullName evidence="1">Phosphopantetheine adenylyltransferase</fullName>
        <ecNumber evidence="1">2.7.7.3</ecNumber>
    </recommendedName>
    <alternativeName>
        <fullName evidence="1">Dephospho-CoA pyrophosphorylase</fullName>
    </alternativeName>
    <alternativeName>
        <fullName evidence="1">Pantetheine-phosphate adenylyltransferase</fullName>
        <shortName evidence="1">PPAT</shortName>
    </alternativeName>
</protein>
<comment type="function">
    <text evidence="1">Reversibly transfers an adenylyl group from ATP to 4'-phosphopantetheine, yielding dephospho-CoA (dPCoA) and pyrophosphate.</text>
</comment>
<comment type="catalytic activity">
    <reaction evidence="1">
        <text>(R)-4'-phosphopantetheine + ATP + H(+) = 3'-dephospho-CoA + diphosphate</text>
        <dbReference type="Rhea" id="RHEA:19801"/>
        <dbReference type="ChEBI" id="CHEBI:15378"/>
        <dbReference type="ChEBI" id="CHEBI:30616"/>
        <dbReference type="ChEBI" id="CHEBI:33019"/>
        <dbReference type="ChEBI" id="CHEBI:57328"/>
        <dbReference type="ChEBI" id="CHEBI:61723"/>
        <dbReference type="EC" id="2.7.7.3"/>
    </reaction>
</comment>
<comment type="cofactor">
    <cofactor evidence="1">
        <name>Mg(2+)</name>
        <dbReference type="ChEBI" id="CHEBI:18420"/>
    </cofactor>
</comment>
<comment type="pathway">
    <text evidence="1">Cofactor biosynthesis; coenzyme A biosynthesis; CoA from (R)-pantothenate: step 4/5.</text>
</comment>
<comment type="subunit">
    <text evidence="1">Homohexamer.</text>
</comment>
<comment type="subcellular location">
    <subcellularLocation>
        <location evidence="1">Cytoplasm</location>
    </subcellularLocation>
</comment>
<comment type="similarity">
    <text evidence="1">Belongs to the bacterial CoaD family.</text>
</comment>
<name>COAD_STRAW</name>
<accession>Q82JT5</accession>
<sequence>MRRAVCPGSFDPITNGHLDIIARASKLYDVVHVAVMINQSKKGLFEVDERIELIRQVTAEFGNVEVESFHGLLVDFCKQRDIPAIVKGLRAVSDFDYELQMAQMNIGLSGVETLFVPTNPTYSFLSSSLVKEVAAWGGDVSHLVPPAVLEALNGRLKQD</sequence>
<keyword id="KW-0067">ATP-binding</keyword>
<keyword id="KW-0173">Coenzyme A biosynthesis</keyword>
<keyword id="KW-0963">Cytoplasm</keyword>
<keyword id="KW-0460">Magnesium</keyword>
<keyword id="KW-0547">Nucleotide-binding</keyword>
<keyword id="KW-0548">Nucleotidyltransferase</keyword>
<keyword id="KW-1185">Reference proteome</keyword>
<keyword id="KW-0808">Transferase</keyword>
<evidence type="ECO:0000255" key="1">
    <source>
        <dbReference type="HAMAP-Rule" id="MF_00151"/>
    </source>
</evidence>
<feature type="chain" id="PRO_0000156281" description="Phosphopantetheine adenylyltransferase">
    <location>
        <begin position="1"/>
        <end position="159"/>
    </location>
</feature>
<feature type="binding site" evidence="1">
    <location>
        <begin position="9"/>
        <end position="10"/>
    </location>
    <ligand>
        <name>ATP</name>
        <dbReference type="ChEBI" id="CHEBI:30616"/>
    </ligand>
</feature>
<feature type="binding site" evidence="1">
    <location>
        <position position="9"/>
    </location>
    <ligand>
        <name>substrate</name>
    </ligand>
</feature>
<feature type="binding site" evidence="1">
    <location>
        <position position="17"/>
    </location>
    <ligand>
        <name>ATP</name>
        <dbReference type="ChEBI" id="CHEBI:30616"/>
    </ligand>
</feature>
<feature type="binding site" evidence="1">
    <location>
        <position position="41"/>
    </location>
    <ligand>
        <name>substrate</name>
    </ligand>
</feature>
<feature type="binding site" evidence="1">
    <location>
        <position position="73"/>
    </location>
    <ligand>
        <name>substrate</name>
    </ligand>
</feature>
<feature type="binding site" evidence="1">
    <location>
        <position position="87"/>
    </location>
    <ligand>
        <name>substrate</name>
    </ligand>
</feature>
<feature type="binding site" evidence="1">
    <location>
        <begin position="88"/>
        <end position="90"/>
    </location>
    <ligand>
        <name>ATP</name>
        <dbReference type="ChEBI" id="CHEBI:30616"/>
    </ligand>
</feature>
<feature type="binding site" evidence="1">
    <location>
        <position position="98"/>
    </location>
    <ligand>
        <name>ATP</name>
        <dbReference type="ChEBI" id="CHEBI:30616"/>
    </ligand>
</feature>
<feature type="binding site" evidence="1">
    <location>
        <begin position="122"/>
        <end position="128"/>
    </location>
    <ligand>
        <name>ATP</name>
        <dbReference type="ChEBI" id="CHEBI:30616"/>
    </ligand>
</feature>
<feature type="site" description="Transition state stabilizer" evidence="1">
    <location>
        <position position="17"/>
    </location>
</feature>
<reference key="1">
    <citation type="journal article" date="2001" name="Proc. Natl. Acad. Sci. U.S.A.">
        <title>Genome sequence of an industrial microorganism Streptomyces avermitilis: deducing the ability of producing secondary metabolites.</title>
        <authorList>
            <person name="Omura S."/>
            <person name="Ikeda H."/>
            <person name="Ishikawa J."/>
            <person name="Hanamoto A."/>
            <person name="Takahashi C."/>
            <person name="Shinose M."/>
            <person name="Takahashi Y."/>
            <person name="Horikawa H."/>
            <person name="Nakazawa H."/>
            <person name="Osonoe T."/>
            <person name="Kikuchi H."/>
            <person name="Shiba T."/>
            <person name="Sakaki Y."/>
            <person name="Hattori M."/>
        </authorList>
    </citation>
    <scope>NUCLEOTIDE SEQUENCE [LARGE SCALE GENOMIC DNA]</scope>
    <source>
        <strain>ATCC 31267 / DSM 46492 / JCM 5070 / NBRC 14893 / NCIMB 12804 / NRRL 8165 / MA-4680</strain>
    </source>
</reference>
<reference key="2">
    <citation type="journal article" date="2003" name="Nat. Biotechnol.">
        <title>Complete genome sequence and comparative analysis of the industrial microorganism Streptomyces avermitilis.</title>
        <authorList>
            <person name="Ikeda H."/>
            <person name="Ishikawa J."/>
            <person name="Hanamoto A."/>
            <person name="Shinose M."/>
            <person name="Kikuchi H."/>
            <person name="Shiba T."/>
            <person name="Sakaki Y."/>
            <person name="Hattori M."/>
            <person name="Omura S."/>
        </authorList>
    </citation>
    <scope>NUCLEOTIDE SEQUENCE [LARGE SCALE GENOMIC DNA]</scope>
    <source>
        <strain>ATCC 31267 / DSM 46492 / JCM 5070 / NBRC 14893 / NCIMB 12804 / NRRL 8165 / MA-4680</strain>
    </source>
</reference>
<organism>
    <name type="scientific">Streptomyces avermitilis (strain ATCC 31267 / DSM 46492 / JCM 5070 / NBRC 14893 / NCIMB 12804 / NRRL 8165 / MA-4680)</name>
    <dbReference type="NCBI Taxonomy" id="227882"/>
    <lineage>
        <taxon>Bacteria</taxon>
        <taxon>Bacillati</taxon>
        <taxon>Actinomycetota</taxon>
        <taxon>Actinomycetes</taxon>
        <taxon>Kitasatosporales</taxon>
        <taxon>Streptomycetaceae</taxon>
        <taxon>Streptomyces</taxon>
    </lineage>
</organism>